<keyword id="KW-0997">Cell inner membrane</keyword>
<keyword id="KW-1003">Cell membrane</keyword>
<keyword id="KW-0143">Chaperone</keyword>
<keyword id="KW-0472">Membrane</keyword>
<keyword id="KW-0653">Protein transport</keyword>
<keyword id="KW-1185">Reference proteome</keyword>
<keyword id="KW-0812">Transmembrane</keyword>
<keyword id="KW-1133">Transmembrane helix</keyword>
<keyword id="KW-0813">Transport</keyword>
<accession>B4SHH0</accession>
<gene>
    <name evidence="1" type="primary">yidC</name>
    <name type="ordered locus">Ppha_2921</name>
</gene>
<protein>
    <recommendedName>
        <fullName evidence="1">Membrane protein insertase YidC</fullName>
    </recommendedName>
    <alternativeName>
        <fullName evidence="1">Foldase YidC</fullName>
    </alternativeName>
    <alternativeName>
        <fullName evidence="1">Membrane integrase YidC</fullName>
    </alternativeName>
    <alternativeName>
        <fullName evidence="1">Membrane protein YidC</fullName>
    </alternativeName>
</protein>
<evidence type="ECO:0000255" key="1">
    <source>
        <dbReference type="HAMAP-Rule" id="MF_01810"/>
    </source>
</evidence>
<organism>
    <name type="scientific">Pelodictyon phaeoclathratiforme (strain DSM 5477 / BU-1)</name>
    <dbReference type="NCBI Taxonomy" id="324925"/>
    <lineage>
        <taxon>Bacteria</taxon>
        <taxon>Pseudomonadati</taxon>
        <taxon>Chlorobiota</taxon>
        <taxon>Chlorobiia</taxon>
        <taxon>Chlorobiales</taxon>
        <taxon>Chlorobiaceae</taxon>
        <taxon>Chlorobium/Pelodictyon group</taxon>
        <taxon>Pelodictyon</taxon>
    </lineage>
</organism>
<reference key="1">
    <citation type="submission" date="2008-06" db="EMBL/GenBank/DDBJ databases">
        <title>Complete sequence of Pelodictyon phaeoclathratiforme BU-1.</title>
        <authorList>
            <consortium name="US DOE Joint Genome Institute"/>
            <person name="Lucas S."/>
            <person name="Copeland A."/>
            <person name="Lapidus A."/>
            <person name="Glavina del Rio T."/>
            <person name="Dalin E."/>
            <person name="Tice H."/>
            <person name="Bruce D."/>
            <person name="Goodwin L."/>
            <person name="Pitluck S."/>
            <person name="Schmutz J."/>
            <person name="Larimer F."/>
            <person name="Land M."/>
            <person name="Hauser L."/>
            <person name="Kyrpides N."/>
            <person name="Mikhailova N."/>
            <person name="Liu Z."/>
            <person name="Li T."/>
            <person name="Zhao F."/>
            <person name="Overmann J."/>
            <person name="Bryant D.A."/>
            <person name="Richardson P."/>
        </authorList>
    </citation>
    <scope>NUCLEOTIDE SEQUENCE [LARGE SCALE GENOMIC DNA]</scope>
    <source>
        <strain>DSM 5477 / BU-1</strain>
    </source>
</reference>
<name>YIDC_PELPB</name>
<sequence length="583" mass="64759">MDRNSVTGLAIIAVIMIVWLQFMSPEKKPLLPSKTVKTETVVQSDVQVPAVSIPAADNFGVFASSSGGQEKLLKVENDLFRATLSSKGATLKSLVLKKHLDGNRLPFDLVSNGKNGALSLLFLTREGKKIDTRDLYFSNVTLDTLRTIKGKESYAVRYHLDVAPQQAIDIIFGFTGDSYKVDYDVKLTGFASELAGNEYQVQWDGGVPFSEKNRPDEAQSALASAYLGGSLVKLDASKEKQSYREEQSGEAQWVAVRNKYFVAALIPHGKSAGIYLDGKRETGNDFESYLAALKIAVPSTAGVVDDKFSLYLGPLDYNIVKAQKVGLEKIMDFGWDWLTRPFAEFIILPVFSWMNGFVSNYGLIIIIFAFLIKLVTYPLSMASTKSMKKMSALQPALKELQEKYKDNPAKLQSELGRIYKEAGVNPIGGCLPVVLQMPLLFAMFYVFRSSIELRQHSFLWAKDLSVPDSIFDFGFAIPMYGSHIAVFPILMAVTVYLQQKITPTTQSNEQMKVMMYMFPAMMLLFFNNMPAGLGLYYLMFNIFSVAQQFYINKTTTAADMPQVNLGLAPAGAQRKQKKGGAKK</sequence>
<feature type="chain" id="PRO_1000187684" description="Membrane protein insertase YidC">
    <location>
        <begin position="1"/>
        <end position="583"/>
    </location>
</feature>
<feature type="transmembrane region" description="Helical" evidence="1">
    <location>
        <begin position="5"/>
        <end position="25"/>
    </location>
</feature>
<feature type="transmembrane region" description="Helical" evidence="1">
    <location>
        <begin position="341"/>
        <end position="361"/>
    </location>
</feature>
<feature type="transmembrane region" description="Helical" evidence="1">
    <location>
        <begin position="362"/>
        <end position="382"/>
    </location>
</feature>
<feature type="transmembrane region" description="Helical" evidence="1">
    <location>
        <begin position="427"/>
        <end position="447"/>
    </location>
</feature>
<feature type="transmembrane region" description="Helical" evidence="1">
    <location>
        <begin position="473"/>
        <end position="493"/>
    </location>
</feature>
<feature type="transmembrane region" description="Helical" evidence="1">
    <location>
        <begin position="520"/>
        <end position="540"/>
    </location>
</feature>
<dbReference type="EMBL" id="CP001110">
    <property type="protein sequence ID" value="ACF45063.1"/>
    <property type="molecule type" value="Genomic_DNA"/>
</dbReference>
<dbReference type="RefSeq" id="WP_012509531.1">
    <property type="nucleotide sequence ID" value="NC_011060.1"/>
</dbReference>
<dbReference type="SMR" id="B4SHH0"/>
<dbReference type="STRING" id="324925.Ppha_2921"/>
<dbReference type="KEGG" id="pph:Ppha_2921"/>
<dbReference type="eggNOG" id="COG0706">
    <property type="taxonomic scope" value="Bacteria"/>
</dbReference>
<dbReference type="HOGENOM" id="CLU_016535_2_0_10"/>
<dbReference type="OrthoDB" id="9780552at2"/>
<dbReference type="Proteomes" id="UP000002724">
    <property type="component" value="Chromosome"/>
</dbReference>
<dbReference type="GO" id="GO:0005886">
    <property type="term" value="C:plasma membrane"/>
    <property type="evidence" value="ECO:0007669"/>
    <property type="project" value="UniProtKB-SubCell"/>
</dbReference>
<dbReference type="GO" id="GO:0032977">
    <property type="term" value="F:membrane insertase activity"/>
    <property type="evidence" value="ECO:0007669"/>
    <property type="project" value="InterPro"/>
</dbReference>
<dbReference type="GO" id="GO:0051205">
    <property type="term" value="P:protein insertion into membrane"/>
    <property type="evidence" value="ECO:0007669"/>
    <property type="project" value="TreeGrafter"/>
</dbReference>
<dbReference type="GO" id="GO:0015031">
    <property type="term" value="P:protein transport"/>
    <property type="evidence" value="ECO:0007669"/>
    <property type="project" value="UniProtKB-KW"/>
</dbReference>
<dbReference type="CDD" id="cd20070">
    <property type="entry name" value="5TM_YidC_Alb3"/>
    <property type="match status" value="1"/>
</dbReference>
<dbReference type="CDD" id="cd19961">
    <property type="entry name" value="EcYidC-like_peri"/>
    <property type="match status" value="1"/>
</dbReference>
<dbReference type="Gene3D" id="2.70.98.90">
    <property type="match status" value="1"/>
</dbReference>
<dbReference type="HAMAP" id="MF_01810">
    <property type="entry name" value="YidC_type1"/>
    <property type="match status" value="1"/>
</dbReference>
<dbReference type="InterPro" id="IPR019998">
    <property type="entry name" value="Membr_insert_YidC"/>
</dbReference>
<dbReference type="InterPro" id="IPR028053">
    <property type="entry name" value="Membr_insert_YidC_N"/>
</dbReference>
<dbReference type="InterPro" id="IPR001708">
    <property type="entry name" value="YidC/ALB3/OXA1/COX18"/>
</dbReference>
<dbReference type="InterPro" id="IPR028055">
    <property type="entry name" value="YidC/Oxa/ALB_C"/>
</dbReference>
<dbReference type="InterPro" id="IPR047196">
    <property type="entry name" value="YidC_ALB_C"/>
</dbReference>
<dbReference type="InterPro" id="IPR038221">
    <property type="entry name" value="YidC_periplasmic_sf"/>
</dbReference>
<dbReference type="NCBIfam" id="TIGR03593">
    <property type="entry name" value="yidC_nterm"/>
    <property type="match status" value="1"/>
</dbReference>
<dbReference type="NCBIfam" id="TIGR03592">
    <property type="entry name" value="yidC_oxa1_cterm"/>
    <property type="match status" value="1"/>
</dbReference>
<dbReference type="PANTHER" id="PTHR12428:SF65">
    <property type="entry name" value="CYTOCHROME C OXIDASE ASSEMBLY PROTEIN COX18, MITOCHONDRIAL"/>
    <property type="match status" value="1"/>
</dbReference>
<dbReference type="PANTHER" id="PTHR12428">
    <property type="entry name" value="OXA1"/>
    <property type="match status" value="1"/>
</dbReference>
<dbReference type="Pfam" id="PF02096">
    <property type="entry name" value="60KD_IMP"/>
    <property type="match status" value="1"/>
</dbReference>
<dbReference type="Pfam" id="PF14849">
    <property type="entry name" value="YidC_periplas"/>
    <property type="match status" value="1"/>
</dbReference>
<dbReference type="PRINTS" id="PR00701">
    <property type="entry name" value="60KDINNERMP"/>
</dbReference>
<dbReference type="PRINTS" id="PR01900">
    <property type="entry name" value="YIDCPROTEIN"/>
</dbReference>
<comment type="function">
    <text evidence="1">Required for the insertion and/or proper folding and/or complex formation of integral membrane proteins into the membrane. Involved in integration of membrane proteins that insert both dependently and independently of the Sec translocase complex, as well as at least some lipoproteins. Aids folding of multispanning membrane proteins.</text>
</comment>
<comment type="subunit">
    <text evidence="1">Interacts with the Sec translocase complex via SecD. Specifically interacts with transmembrane segments of nascent integral membrane proteins during membrane integration.</text>
</comment>
<comment type="subcellular location">
    <subcellularLocation>
        <location evidence="1">Cell inner membrane</location>
        <topology evidence="1">Multi-pass membrane protein</topology>
    </subcellularLocation>
</comment>
<comment type="similarity">
    <text evidence="1">Belongs to the OXA1/ALB3/YidC family. Type 1 subfamily.</text>
</comment>
<proteinExistence type="inferred from homology"/>